<accession>B9KNE8</accession>
<dbReference type="EC" id="2.1.3.2" evidence="1"/>
<dbReference type="EMBL" id="CP001150">
    <property type="protein sequence ID" value="ACM02254.1"/>
    <property type="molecule type" value="Genomic_DNA"/>
</dbReference>
<dbReference type="RefSeq" id="WP_002721320.1">
    <property type="nucleotide sequence ID" value="NC_011963.1"/>
</dbReference>
<dbReference type="SMR" id="B9KNE8"/>
<dbReference type="GeneID" id="67447774"/>
<dbReference type="KEGG" id="rsk:RSKD131_2394"/>
<dbReference type="HOGENOM" id="CLU_043846_2_0_5"/>
<dbReference type="UniPathway" id="UPA00070">
    <property type="reaction ID" value="UER00116"/>
</dbReference>
<dbReference type="GO" id="GO:0005829">
    <property type="term" value="C:cytosol"/>
    <property type="evidence" value="ECO:0007669"/>
    <property type="project" value="TreeGrafter"/>
</dbReference>
<dbReference type="GO" id="GO:0016597">
    <property type="term" value="F:amino acid binding"/>
    <property type="evidence" value="ECO:0007669"/>
    <property type="project" value="InterPro"/>
</dbReference>
<dbReference type="GO" id="GO:0004070">
    <property type="term" value="F:aspartate carbamoyltransferase activity"/>
    <property type="evidence" value="ECO:0007669"/>
    <property type="project" value="UniProtKB-UniRule"/>
</dbReference>
<dbReference type="GO" id="GO:0006207">
    <property type="term" value="P:'de novo' pyrimidine nucleobase biosynthetic process"/>
    <property type="evidence" value="ECO:0007669"/>
    <property type="project" value="InterPro"/>
</dbReference>
<dbReference type="GO" id="GO:0044205">
    <property type="term" value="P:'de novo' UMP biosynthetic process"/>
    <property type="evidence" value="ECO:0007669"/>
    <property type="project" value="UniProtKB-UniRule"/>
</dbReference>
<dbReference type="GO" id="GO:0006520">
    <property type="term" value="P:amino acid metabolic process"/>
    <property type="evidence" value="ECO:0007669"/>
    <property type="project" value="InterPro"/>
</dbReference>
<dbReference type="FunFam" id="3.40.50.1370:FF:000007">
    <property type="entry name" value="Aspartate carbamoyltransferase"/>
    <property type="match status" value="1"/>
</dbReference>
<dbReference type="Gene3D" id="3.40.50.1370">
    <property type="entry name" value="Aspartate/ornithine carbamoyltransferase"/>
    <property type="match status" value="2"/>
</dbReference>
<dbReference type="HAMAP" id="MF_00001">
    <property type="entry name" value="Asp_carb_tr"/>
    <property type="match status" value="1"/>
</dbReference>
<dbReference type="InterPro" id="IPR006132">
    <property type="entry name" value="Asp/Orn_carbamoyltranf_P-bd"/>
</dbReference>
<dbReference type="InterPro" id="IPR006130">
    <property type="entry name" value="Asp/Orn_carbamoylTrfase"/>
</dbReference>
<dbReference type="InterPro" id="IPR036901">
    <property type="entry name" value="Asp/Orn_carbamoylTrfase_sf"/>
</dbReference>
<dbReference type="InterPro" id="IPR002082">
    <property type="entry name" value="Asp_carbamoyltransf"/>
</dbReference>
<dbReference type="InterPro" id="IPR006131">
    <property type="entry name" value="Asp_carbamoyltransf_Asp/Orn-bd"/>
</dbReference>
<dbReference type="NCBIfam" id="TIGR00670">
    <property type="entry name" value="asp_carb_tr"/>
    <property type="match status" value="1"/>
</dbReference>
<dbReference type="NCBIfam" id="NF002032">
    <property type="entry name" value="PRK00856.1"/>
    <property type="match status" value="1"/>
</dbReference>
<dbReference type="PANTHER" id="PTHR45753:SF6">
    <property type="entry name" value="ASPARTATE CARBAMOYLTRANSFERASE"/>
    <property type="match status" value="1"/>
</dbReference>
<dbReference type="PANTHER" id="PTHR45753">
    <property type="entry name" value="ORNITHINE CARBAMOYLTRANSFERASE, MITOCHONDRIAL"/>
    <property type="match status" value="1"/>
</dbReference>
<dbReference type="Pfam" id="PF00185">
    <property type="entry name" value="OTCace"/>
    <property type="match status" value="1"/>
</dbReference>
<dbReference type="Pfam" id="PF02729">
    <property type="entry name" value="OTCace_N"/>
    <property type="match status" value="1"/>
</dbReference>
<dbReference type="PRINTS" id="PR00100">
    <property type="entry name" value="AOTCASE"/>
</dbReference>
<dbReference type="PRINTS" id="PR00101">
    <property type="entry name" value="ATCASE"/>
</dbReference>
<dbReference type="SUPFAM" id="SSF53671">
    <property type="entry name" value="Aspartate/ornithine carbamoyltransferase"/>
    <property type="match status" value="1"/>
</dbReference>
<dbReference type="PROSITE" id="PS00097">
    <property type="entry name" value="CARBAMOYLTRANSFERASE"/>
    <property type="match status" value="1"/>
</dbReference>
<feature type="chain" id="PRO_1000116155" description="Aspartate carbamoyltransferase catalytic subunit">
    <location>
        <begin position="1"/>
        <end position="320"/>
    </location>
</feature>
<feature type="binding site" evidence="1">
    <location>
        <position position="58"/>
    </location>
    <ligand>
        <name>carbamoyl phosphate</name>
        <dbReference type="ChEBI" id="CHEBI:58228"/>
    </ligand>
</feature>
<feature type="binding site" evidence="1">
    <location>
        <position position="59"/>
    </location>
    <ligand>
        <name>carbamoyl phosphate</name>
        <dbReference type="ChEBI" id="CHEBI:58228"/>
    </ligand>
</feature>
<feature type="binding site" evidence="1">
    <location>
        <position position="86"/>
    </location>
    <ligand>
        <name>L-aspartate</name>
        <dbReference type="ChEBI" id="CHEBI:29991"/>
    </ligand>
</feature>
<feature type="binding site" evidence="1">
    <location>
        <position position="108"/>
    </location>
    <ligand>
        <name>carbamoyl phosphate</name>
        <dbReference type="ChEBI" id="CHEBI:58228"/>
    </ligand>
</feature>
<feature type="binding site" evidence="1">
    <location>
        <position position="136"/>
    </location>
    <ligand>
        <name>carbamoyl phosphate</name>
        <dbReference type="ChEBI" id="CHEBI:58228"/>
    </ligand>
</feature>
<feature type="binding site" evidence="1">
    <location>
        <position position="139"/>
    </location>
    <ligand>
        <name>carbamoyl phosphate</name>
        <dbReference type="ChEBI" id="CHEBI:58228"/>
    </ligand>
</feature>
<feature type="binding site" evidence="1">
    <location>
        <position position="169"/>
    </location>
    <ligand>
        <name>L-aspartate</name>
        <dbReference type="ChEBI" id="CHEBI:29991"/>
    </ligand>
</feature>
<feature type="binding site" evidence="1">
    <location>
        <position position="223"/>
    </location>
    <ligand>
        <name>L-aspartate</name>
        <dbReference type="ChEBI" id="CHEBI:29991"/>
    </ligand>
</feature>
<feature type="binding site" evidence="1">
    <location>
        <position position="264"/>
    </location>
    <ligand>
        <name>carbamoyl phosphate</name>
        <dbReference type="ChEBI" id="CHEBI:58228"/>
    </ligand>
</feature>
<feature type="binding site" evidence="1">
    <location>
        <position position="265"/>
    </location>
    <ligand>
        <name>carbamoyl phosphate</name>
        <dbReference type="ChEBI" id="CHEBI:58228"/>
    </ligand>
</feature>
<evidence type="ECO:0000255" key="1">
    <source>
        <dbReference type="HAMAP-Rule" id="MF_00001"/>
    </source>
</evidence>
<sequence length="320" mass="35161">MTFRARHLLGIEHLAPDEIRSVLDLADSYVDLNRRTMKQSDALAGMTQINMFFENSTRTQSSFELAGKRLGADVMNMAVAQSSVKKGETLLDTAMTLNAMHPDLLVVRHPASGAVNLLASKVNCAVLNAGDGRHEHPTQALLDALTIRRAKGRIQRLTVAICGDIAHSRVARSNLILLGKMENRVRLIAPPTLMPPGVGEFGCELYDDMKKGLEGADVVMMLRLQKERMDGAFIPSEREYYHRFGLDAEKLAFAKEDAIVMHPGPMNRGVEIDGTLADDINRSVIQDQVEMGVAVRMACMDLLARNLRAERGRAAVGVMA</sequence>
<gene>
    <name evidence="1" type="primary">pyrB</name>
    <name type="ordered locus">RSKD131_2394</name>
</gene>
<reference key="1">
    <citation type="journal article" date="2009" name="J. Bacteriol.">
        <title>Complete genome sequence of Rhodobacter sphaeroides KD131.</title>
        <authorList>
            <person name="Lim S.-K."/>
            <person name="Kim S.J."/>
            <person name="Cha S.H."/>
            <person name="Oh Y.-K."/>
            <person name="Rhee H.-J."/>
            <person name="Kim M.-S."/>
            <person name="Lee J.K."/>
        </authorList>
    </citation>
    <scope>NUCLEOTIDE SEQUENCE [LARGE SCALE GENOMIC DNA]</scope>
    <source>
        <strain>KD131 / KCTC 12085</strain>
    </source>
</reference>
<name>PYRB_CERSK</name>
<protein>
    <recommendedName>
        <fullName evidence="1">Aspartate carbamoyltransferase catalytic subunit</fullName>
        <ecNumber evidence="1">2.1.3.2</ecNumber>
    </recommendedName>
    <alternativeName>
        <fullName evidence="1">Aspartate transcarbamylase</fullName>
        <shortName evidence="1">ATCase</shortName>
    </alternativeName>
</protein>
<keyword id="KW-0665">Pyrimidine biosynthesis</keyword>
<keyword id="KW-0808">Transferase</keyword>
<proteinExistence type="inferred from homology"/>
<organism>
    <name type="scientific">Cereibacter sphaeroides (strain KD131 / KCTC 12085)</name>
    <name type="common">Rhodobacter sphaeroides</name>
    <dbReference type="NCBI Taxonomy" id="557760"/>
    <lineage>
        <taxon>Bacteria</taxon>
        <taxon>Pseudomonadati</taxon>
        <taxon>Pseudomonadota</taxon>
        <taxon>Alphaproteobacteria</taxon>
        <taxon>Rhodobacterales</taxon>
        <taxon>Paracoccaceae</taxon>
        <taxon>Cereibacter</taxon>
    </lineage>
</organism>
<comment type="function">
    <text evidence="1">Catalyzes the condensation of carbamoyl phosphate and aspartate to form carbamoyl aspartate and inorganic phosphate, the committed step in the de novo pyrimidine nucleotide biosynthesis pathway.</text>
</comment>
<comment type="catalytic activity">
    <reaction evidence="1">
        <text>carbamoyl phosphate + L-aspartate = N-carbamoyl-L-aspartate + phosphate + H(+)</text>
        <dbReference type="Rhea" id="RHEA:20013"/>
        <dbReference type="ChEBI" id="CHEBI:15378"/>
        <dbReference type="ChEBI" id="CHEBI:29991"/>
        <dbReference type="ChEBI" id="CHEBI:32814"/>
        <dbReference type="ChEBI" id="CHEBI:43474"/>
        <dbReference type="ChEBI" id="CHEBI:58228"/>
        <dbReference type="EC" id="2.1.3.2"/>
    </reaction>
</comment>
<comment type="pathway">
    <text evidence="1">Pyrimidine metabolism; UMP biosynthesis via de novo pathway; (S)-dihydroorotate from bicarbonate: step 2/3.</text>
</comment>
<comment type="subunit">
    <text evidence="1">Heterododecamer (2C3:3R2) of six catalytic PyrB chains organized as two trimers (C3), and six regulatory PyrI chains organized as three dimers (R2).</text>
</comment>
<comment type="similarity">
    <text evidence="1">Belongs to the aspartate/ornithine carbamoyltransferase superfamily. ATCase family.</text>
</comment>